<proteinExistence type="inferred from homology"/>
<accession>Q7WKM7</accession>
<evidence type="ECO:0000255" key="1">
    <source>
        <dbReference type="HAMAP-Rule" id="MF_00172"/>
    </source>
</evidence>
<gene>
    <name evidence="1" type="primary">metE</name>
    <name type="ordered locus">BB2079</name>
</gene>
<sequence>MTIIHNLGFPRIGAQRELKRAVEAYWAGRQTAEALHETGRALRAAHWQRQADAGVAFVPVGDFAWYDHILEWTTLLGAVPARFGHPEGKPVDLDTLFRMGRGRAPSGKPAAACEMTKWFDTNYHYIVPELTPGQTFRVAREDLFEQVKEAQALGHRVKPVIPGPLTWLWLGKGDAFAQGAGDIGKLQLLDALLPVYGEVLERLAGLGVEWVQIDEPALVLDLPQAWRDAYQAVYAKLAASPVKLLLATYFDGLKDNLATALALPVAGLHVDLVRAPDQLSDVASGLRPGQVLSAGVINGRNIWRTDLDAALAMLAPVREQLQERLWLAPSCSLLHVPVDLAGETELDAELLGWLSFAVQKLDELCLLGKALGGDADPAVQQGLAAQRAALQARRQSPRIHNPAVAQRMAGQAGVSRERAPFGQRIARQQSELRLPAFPTTTIGSFPQTAEIRALRRDWKSGALTDSAYENAIRKEIEEVIRFQEKVGLDVLVHGEPERNDMVEYFGELLAGFAFTKNGWVQSYGSRCVKPPIIFGDVARPAPMTVGWSAYAQSLTDKPVKGMLTGPVTILQWSFVRDDQPREATCRQLALALRDEVVDLEAAGIRVIQIDEPAIREGLPLRRADWRAYLDWAVDCFRLSTAGVGEATQIHTHMCYSEFNDIIESIAAMDADVITIETSRSNMELLKAFEDFHYPNDIGPGVYDIHSPNVPEVDWMVELMRKAAARLPKERLWVNPDCGLKTRAWPETEAALIGMVQAARTLRAA</sequence>
<organism>
    <name type="scientific">Bordetella bronchiseptica (strain ATCC BAA-588 / NCTC 13252 / RB50)</name>
    <name type="common">Alcaligenes bronchisepticus</name>
    <dbReference type="NCBI Taxonomy" id="257310"/>
    <lineage>
        <taxon>Bacteria</taxon>
        <taxon>Pseudomonadati</taxon>
        <taxon>Pseudomonadota</taxon>
        <taxon>Betaproteobacteria</taxon>
        <taxon>Burkholderiales</taxon>
        <taxon>Alcaligenaceae</taxon>
        <taxon>Bordetella</taxon>
    </lineage>
</organism>
<keyword id="KW-0028">Amino-acid biosynthesis</keyword>
<keyword id="KW-0479">Metal-binding</keyword>
<keyword id="KW-0486">Methionine biosynthesis</keyword>
<keyword id="KW-0489">Methyltransferase</keyword>
<keyword id="KW-0677">Repeat</keyword>
<keyword id="KW-0808">Transferase</keyword>
<keyword id="KW-0862">Zinc</keyword>
<protein>
    <recommendedName>
        <fullName evidence="1">5-methyltetrahydropteroyltriglutamate--homocysteine methyltransferase</fullName>
        <ecNumber evidence="1">2.1.1.14</ecNumber>
    </recommendedName>
    <alternativeName>
        <fullName evidence="1">Cobalamin-independent methionine synthase</fullName>
    </alternativeName>
    <alternativeName>
        <fullName evidence="1">Methionine synthase, vitamin-B12 independent isozyme</fullName>
    </alternativeName>
</protein>
<reference key="1">
    <citation type="journal article" date="2003" name="Nat. Genet.">
        <title>Comparative analysis of the genome sequences of Bordetella pertussis, Bordetella parapertussis and Bordetella bronchiseptica.</title>
        <authorList>
            <person name="Parkhill J."/>
            <person name="Sebaihia M."/>
            <person name="Preston A."/>
            <person name="Murphy L.D."/>
            <person name="Thomson N.R."/>
            <person name="Harris D.E."/>
            <person name="Holden M.T.G."/>
            <person name="Churcher C.M."/>
            <person name="Bentley S.D."/>
            <person name="Mungall K.L."/>
            <person name="Cerdeno-Tarraga A.-M."/>
            <person name="Temple L."/>
            <person name="James K.D."/>
            <person name="Harris B."/>
            <person name="Quail M.A."/>
            <person name="Achtman M."/>
            <person name="Atkin R."/>
            <person name="Baker S."/>
            <person name="Basham D."/>
            <person name="Bason N."/>
            <person name="Cherevach I."/>
            <person name="Chillingworth T."/>
            <person name="Collins M."/>
            <person name="Cronin A."/>
            <person name="Davis P."/>
            <person name="Doggett J."/>
            <person name="Feltwell T."/>
            <person name="Goble A."/>
            <person name="Hamlin N."/>
            <person name="Hauser H."/>
            <person name="Holroyd S."/>
            <person name="Jagels K."/>
            <person name="Leather S."/>
            <person name="Moule S."/>
            <person name="Norberczak H."/>
            <person name="O'Neil S."/>
            <person name="Ormond D."/>
            <person name="Price C."/>
            <person name="Rabbinowitsch E."/>
            <person name="Rutter S."/>
            <person name="Sanders M."/>
            <person name="Saunders D."/>
            <person name="Seeger K."/>
            <person name="Sharp S."/>
            <person name="Simmonds M."/>
            <person name="Skelton J."/>
            <person name="Squares R."/>
            <person name="Squares S."/>
            <person name="Stevens K."/>
            <person name="Unwin L."/>
            <person name="Whitehead S."/>
            <person name="Barrell B.G."/>
            <person name="Maskell D.J."/>
        </authorList>
    </citation>
    <scope>NUCLEOTIDE SEQUENCE [LARGE SCALE GENOMIC DNA]</scope>
    <source>
        <strain>ATCC BAA-588 / NCTC 13252 / RB50</strain>
    </source>
</reference>
<comment type="function">
    <text evidence="1">Catalyzes the transfer of a methyl group from 5-methyltetrahydrofolate to homocysteine resulting in methionine formation.</text>
</comment>
<comment type="catalytic activity">
    <reaction evidence="1">
        <text>5-methyltetrahydropteroyltri-L-glutamate + L-homocysteine = tetrahydropteroyltri-L-glutamate + L-methionine</text>
        <dbReference type="Rhea" id="RHEA:21196"/>
        <dbReference type="ChEBI" id="CHEBI:57844"/>
        <dbReference type="ChEBI" id="CHEBI:58140"/>
        <dbReference type="ChEBI" id="CHEBI:58199"/>
        <dbReference type="ChEBI" id="CHEBI:58207"/>
        <dbReference type="EC" id="2.1.1.14"/>
    </reaction>
</comment>
<comment type="cofactor">
    <cofactor evidence="1">
        <name>Zn(2+)</name>
        <dbReference type="ChEBI" id="CHEBI:29105"/>
    </cofactor>
    <text evidence="1">Binds 1 zinc ion per subunit.</text>
</comment>
<comment type="pathway">
    <text evidence="1">Amino-acid biosynthesis; L-methionine biosynthesis via de novo pathway; L-methionine from L-homocysteine (MetE route): step 1/1.</text>
</comment>
<comment type="similarity">
    <text evidence="1">Belongs to the vitamin-B12 independent methionine synthase family.</text>
</comment>
<dbReference type="EC" id="2.1.1.14" evidence="1"/>
<dbReference type="EMBL" id="BX640443">
    <property type="protein sequence ID" value="CAE32575.1"/>
    <property type="molecule type" value="Genomic_DNA"/>
</dbReference>
<dbReference type="RefSeq" id="WP_010926372.1">
    <property type="nucleotide sequence ID" value="NC_002927.3"/>
</dbReference>
<dbReference type="SMR" id="Q7WKM7"/>
<dbReference type="GeneID" id="93204421"/>
<dbReference type="KEGG" id="bbr:BB2079"/>
<dbReference type="eggNOG" id="COG0620">
    <property type="taxonomic scope" value="Bacteria"/>
</dbReference>
<dbReference type="HOGENOM" id="CLU_013175_0_0_4"/>
<dbReference type="UniPathway" id="UPA00051">
    <property type="reaction ID" value="UER00082"/>
</dbReference>
<dbReference type="Proteomes" id="UP000001027">
    <property type="component" value="Chromosome"/>
</dbReference>
<dbReference type="GO" id="GO:0003871">
    <property type="term" value="F:5-methyltetrahydropteroyltriglutamate-homocysteine S-methyltransferase activity"/>
    <property type="evidence" value="ECO:0007669"/>
    <property type="project" value="UniProtKB-UniRule"/>
</dbReference>
<dbReference type="GO" id="GO:0008270">
    <property type="term" value="F:zinc ion binding"/>
    <property type="evidence" value="ECO:0007669"/>
    <property type="project" value="InterPro"/>
</dbReference>
<dbReference type="GO" id="GO:0009086">
    <property type="term" value="P:methionine biosynthetic process"/>
    <property type="evidence" value="ECO:0007669"/>
    <property type="project" value="UniProtKB-UniRule"/>
</dbReference>
<dbReference type="GO" id="GO:0032259">
    <property type="term" value="P:methylation"/>
    <property type="evidence" value="ECO:0007669"/>
    <property type="project" value="UniProtKB-KW"/>
</dbReference>
<dbReference type="CDD" id="cd03311">
    <property type="entry name" value="CIMS_C_terminal_like"/>
    <property type="match status" value="1"/>
</dbReference>
<dbReference type="CDD" id="cd03312">
    <property type="entry name" value="CIMS_N_terminal_like"/>
    <property type="match status" value="1"/>
</dbReference>
<dbReference type="FunFam" id="3.20.20.210:FF:000002">
    <property type="entry name" value="5-methyltetrahydropteroyltriglutamate--homocysteine methyltransferase"/>
    <property type="match status" value="1"/>
</dbReference>
<dbReference type="FunFam" id="3.20.20.210:FF:000003">
    <property type="entry name" value="5-methyltetrahydropteroyltriglutamate--homocysteine methyltransferase"/>
    <property type="match status" value="1"/>
</dbReference>
<dbReference type="Gene3D" id="3.20.20.210">
    <property type="match status" value="2"/>
</dbReference>
<dbReference type="HAMAP" id="MF_00172">
    <property type="entry name" value="Meth_synth"/>
    <property type="match status" value="1"/>
</dbReference>
<dbReference type="InterPro" id="IPR013215">
    <property type="entry name" value="Cbl-indep_Met_Synth_N"/>
</dbReference>
<dbReference type="InterPro" id="IPR006276">
    <property type="entry name" value="Cobalamin-indep_Met_synthase"/>
</dbReference>
<dbReference type="InterPro" id="IPR002629">
    <property type="entry name" value="Met_Synth_C/arc"/>
</dbReference>
<dbReference type="InterPro" id="IPR038071">
    <property type="entry name" value="UROD/MetE-like_sf"/>
</dbReference>
<dbReference type="NCBIfam" id="TIGR01371">
    <property type="entry name" value="met_syn_B12ind"/>
    <property type="match status" value="1"/>
</dbReference>
<dbReference type="NCBIfam" id="NF003556">
    <property type="entry name" value="PRK05222.1"/>
    <property type="match status" value="1"/>
</dbReference>
<dbReference type="PANTHER" id="PTHR30519">
    <property type="entry name" value="5-METHYLTETRAHYDROPTEROYLTRIGLUTAMATE--HOMOCYSTEINE METHYLTRANSFERASE"/>
    <property type="match status" value="1"/>
</dbReference>
<dbReference type="Pfam" id="PF08267">
    <property type="entry name" value="Meth_synt_1"/>
    <property type="match status" value="1"/>
</dbReference>
<dbReference type="Pfam" id="PF01717">
    <property type="entry name" value="Meth_synt_2"/>
    <property type="match status" value="1"/>
</dbReference>
<dbReference type="PIRSF" id="PIRSF000382">
    <property type="entry name" value="MeTrfase_B12_ind"/>
    <property type="match status" value="1"/>
</dbReference>
<dbReference type="SUPFAM" id="SSF51726">
    <property type="entry name" value="UROD/MetE-like"/>
    <property type="match status" value="2"/>
</dbReference>
<feature type="chain" id="PRO_0000098615" description="5-methyltetrahydropteroyltriglutamate--homocysteine methyltransferase">
    <location>
        <begin position="1"/>
        <end position="764"/>
    </location>
</feature>
<feature type="active site" description="Proton donor" evidence="1">
    <location>
        <position position="705"/>
    </location>
</feature>
<feature type="binding site" evidence="1">
    <location>
        <begin position="16"/>
        <end position="19"/>
    </location>
    <ligand>
        <name>5-methyltetrahydropteroyltri-L-glutamate</name>
        <dbReference type="ChEBI" id="CHEBI:58207"/>
    </ligand>
</feature>
<feature type="binding site" evidence="1">
    <location>
        <position position="117"/>
    </location>
    <ligand>
        <name>5-methyltetrahydropteroyltri-L-glutamate</name>
        <dbReference type="ChEBI" id="CHEBI:58207"/>
    </ligand>
</feature>
<feature type="binding site" evidence="1">
    <location>
        <begin position="442"/>
        <end position="444"/>
    </location>
    <ligand>
        <name>L-homocysteine</name>
        <dbReference type="ChEBI" id="CHEBI:58199"/>
    </ligand>
</feature>
<feature type="binding site" evidence="1">
    <location>
        <begin position="442"/>
        <end position="444"/>
    </location>
    <ligand>
        <name>L-methionine</name>
        <dbReference type="ChEBI" id="CHEBI:57844"/>
    </ligand>
</feature>
<feature type="binding site" evidence="1">
    <location>
        <position position="495"/>
    </location>
    <ligand>
        <name>L-homocysteine</name>
        <dbReference type="ChEBI" id="CHEBI:58199"/>
    </ligand>
</feature>
<feature type="binding site" evidence="1">
    <location>
        <position position="495"/>
    </location>
    <ligand>
        <name>L-methionine</name>
        <dbReference type="ChEBI" id="CHEBI:57844"/>
    </ligand>
</feature>
<feature type="binding site" evidence="1">
    <location>
        <begin position="526"/>
        <end position="527"/>
    </location>
    <ligand>
        <name>5-methyltetrahydropteroyltri-L-glutamate</name>
        <dbReference type="ChEBI" id="CHEBI:58207"/>
    </ligand>
</feature>
<feature type="binding site" evidence="1">
    <location>
        <position position="572"/>
    </location>
    <ligand>
        <name>5-methyltetrahydropteroyltri-L-glutamate</name>
        <dbReference type="ChEBI" id="CHEBI:58207"/>
    </ligand>
</feature>
<feature type="binding site" evidence="1">
    <location>
        <position position="610"/>
    </location>
    <ligand>
        <name>L-homocysteine</name>
        <dbReference type="ChEBI" id="CHEBI:58199"/>
    </ligand>
</feature>
<feature type="binding site" evidence="1">
    <location>
        <position position="610"/>
    </location>
    <ligand>
        <name>L-methionine</name>
        <dbReference type="ChEBI" id="CHEBI:57844"/>
    </ligand>
</feature>
<feature type="binding site" evidence="1">
    <location>
        <position position="616"/>
    </location>
    <ligand>
        <name>5-methyltetrahydropteroyltri-L-glutamate</name>
        <dbReference type="ChEBI" id="CHEBI:58207"/>
    </ligand>
</feature>
<feature type="binding site" evidence="1">
    <location>
        <position position="652"/>
    </location>
    <ligand>
        <name>Zn(2+)</name>
        <dbReference type="ChEBI" id="CHEBI:29105"/>
        <note>catalytic</note>
    </ligand>
</feature>
<feature type="binding site" evidence="1">
    <location>
        <position position="654"/>
    </location>
    <ligand>
        <name>Zn(2+)</name>
        <dbReference type="ChEBI" id="CHEBI:29105"/>
        <note>catalytic</note>
    </ligand>
</feature>
<feature type="binding site" evidence="1">
    <location>
        <position position="676"/>
    </location>
    <ligand>
        <name>Zn(2+)</name>
        <dbReference type="ChEBI" id="CHEBI:29105"/>
        <note>catalytic</note>
    </ligand>
</feature>
<feature type="binding site" evidence="1">
    <location>
        <position position="737"/>
    </location>
    <ligand>
        <name>Zn(2+)</name>
        <dbReference type="ChEBI" id="CHEBI:29105"/>
        <note>catalytic</note>
    </ligand>
</feature>
<name>METE_BORBR</name>